<comment type="function">
    <text evidence="1">Nucleoside triphosphate pyrophosphatase that hydrolyzes dTTP and UTP. May have a dual role in cell division arrest and in preventing the incorporation of modified nucleotides into cellular nucleic acids.</text>
</comment>
<comment type="catalytic activity">
    <reaction evidence="1">
        <text>dTTP + H2O = dTMP + diphosphate + H(+)</text>
        <dbReference type="Rhea" id="RHEA:28534"/>
        <dbReference type="ChEBI" id="CHEBI:15377"/>
        <dbReference type="ChEBI" id="CHEBI:15378"/>
        <dbReference type="ChEBI" id="CHEBI:33019"/>
        <dbReference type="ChEBI" id="CHEBI:37568"/>
        <dbReference type="ChEBI" id="CHEBI:63528"/>
        <dbReference type="EC" id="3.6.1.9"/>
    </reaction>
</comment>
<comment type="catalytic activity">
    <reaction evidence="1">
        <text>UTP + H2O = UMP + diphosphate + H(+)</text>
        <dbReference type="Rhea" id="RHEA:29395"/>
        <dbReference type="ChEBI" id="CHEBI:15377"/>
        <dbReference type="ChEBI" id="CHEBI:15378"/>
        <dbReference type="ChEBI" id="CHEBI:33019"/>
        <dbReference type="ChEBI" id="CHEBI:46398"/>
        <dbReference type="ChEBI" id="CHEBI:57865"/>
        <dbReference type="EC" id="3.6.1.9"/>
    </reaction>
</comment>
<comment type="cofactor">
    <cofactor evidence="1">
        <name>a divalent metal cation</name>
        <dbReference type="ChEBI" id="CHEBI:60240"/>
    </cofactor>
</comment>
<comment type="subcellular location">
    <subcellularLocation>
        <location evidence="1">Cytoplasm</location>
    </subcellularLocation>
</comment>
<comment type="similarity">
    <text evidence="1">Belongs to the Maf family. YhdE subfamily.</text>
</comment>
<protein>
    <recommendedName>
        <fullName evidence="1">dTTP/UTP pyrophosphatase</fullName>
        <shortName evidence="1">dTTPase/UTPase</shortName>
        <ecNumber evidence="1">3.6.1.9</ecNumber>
    </recommendedName>
    <alternativeName>
        <fullName evidence="1">Nucleoside triphosphate pyrophosphatase</fullName>
    </alternativeName>
    <alternativeName>
        <fullName evidence="1">Nucleotide pyrophosphatase</fullName>
        <shortName evidence="1">Nucleotide PPase</shortName>
    </alternativeName>
</protein>
<gene>
    <name type="ordered locus">PH1941</name>
</gene>
<organism>
    <name type="scientific">Pyrococcus horikoshii (strain ATCC 700860 / DSM 12428 / JCM 9974 / NBRC 100139 / OT-3)</name>
    <dbReference type="NCBI Taxonomy" id="70601"/>
    <lineage>
        <taxon>Archaea</taxon>
        <taxon>Methanobacteriati</taxon>
        <taxon>Methanobacteriota</taxon>
        <taxon>Thermococci</taxon>
        <taxon>Thermococcales</taxon>
        <taxon>Thermococcaceae</taxon>
        <taxon>Pyrococcus</taxon>
    </lineage>
</organism>
<accession>O59604</accession>
<name>NTPPA_PYRHO</name>
<evidence type="ECO:0000255" key="1">
    <source>
        <dbReference type="HAMAP-Rule" id="MF_00528"/>
    </source>
</evidence>
<proteinExistence type="inferred from homology"/>
<feature type="chain" id="PRO_0000123088" description="dTTP/UTP pyrophosphatase">
    <location>
        <begin position="1"/>
        <end position="186"/>
    </location>
</feature>
<feature type="active site" description="Proton acceptor" evidence="1">
    <location>
        <position position="66"/>
    </location>
</feature>
<feature type="site" description="Important for substrate specificity" evidence="1">
    <location>
        <position position="11"/>
    </location>
</feature>
<feature type="site" description="Important for substrate specificity" evidence="1">
    <location>
        <position position="67"/>
    </location>
</feature>
<feature type="site" description="Important for substrate specificity" evidence="1">
    <location>
        <position position="149"/>
    </location>
</feature>
<reference key="1">
    <citation type="journal article" date="1998" name="DNA Res.">
        <title>Complete sequence and gene organization of the genome of a hyper-thermophilic archaebacterium, Pyrococcus horikoshii OT3.</title>
        <authorList>
            <person name="Kawarabayasi Y."/>
            <person name="Sawada M."/>
            <person name="Horikawa H."/>
            <person name="Haikawa Y."/>
            <person name="Hino Y."/>
            <person name="Yamamoto S."/>
            <person name="Sekine M."/>
            <person name="Baba S."/>
            <person name="Kosugi H."/>
            <person name="Hosoyama A."/>
            <person name="Nagai Y."/>
            <person name="Sakai M."/>
            <person name="Ogura K."/>
            <person name="Otsuka R."/>
            <person name="Nakazawa H."/>
            <person name="Takamiya M."/>
            <person name="Ohfuku Y."/>
            <person name="Funahashi T."/>
            <person name="Tanaka T."/>
            <person name="Kudoh Y."/>
            <person name="Yamazaki J."/>
            <person name="Kushida N."/>
            <person name="Oguchi A."/>
            <person name="Aoki K."/>
            <person name="Yoshizawa T."/>
            <person name="Nakamura Y."/>
            <person name="Robb F.T."/>
            <person name="Horikoshi K."/>
            <person name="Masuchi Y."/>
            <person name="Shizuya H."/>
            <person name="Kikuchi H."/>
        </authorList>
    </citation>
    <scope>NUCLEOTIDE SEQUENCE [LARGE SCALE GENOMIC DNA]</scope>
    <source>
        <strain>ATCC 700860 / DSM 12428 / JCM 9974 / NBRC 100139 / OT-3</strain>
    </source>
</reference>
<dbReference type="EC" id="3.6.1.9" evidence="1"/>
<dbReference type="EMBL" id="BA000001">
    <property type="protein sequence ID" value="BAA31068.1"/>
    <property type="molecule type" value="Genomic_DNA"/>
</dbReference>
<dbReference type="PIR" id="E71209">
    <property type="entry name" value="E71209"/>
</dbReference>
<dbReference type="SMR" id="O59604"/>
<dbReference type="STRING" id="70601.gene:9378954"/>
<dbReference type="EnsemblBacteria" id="BAA31068">
    <property type="protein sequence ID" value="BAA31068"/>
    <property type="gene ID" value="BAA31068"/>
</dbReference>
<dbReference type="KEGG" id="pho:PH1941"/>
<dbReference type="eggNOG" id="arCOG05007">
    <property type="taxonomic scope" value="Archaea"/>
</dbReference>
<dbReference type="Proteomes" id="UP000000752">
    <property type="component" value="Chromosome"/>
</dbReference>
<dbReference type="GO" id="GO:0005737">
    <property type="term" value="C:cytoplasm"/>
    <property type="evidence" value="ECO:0007669"/>
    <property type="project" value="UniProtKB-SubCell"/>
</dbReference>
<dbReference type="GO" id="GO:0036218">
    <property type="term" value="F:dTTP diphosphatase activity"/>
    <property type="evidence" value="ECO:0007669"/>
    <property type="project" value="RHEA"/>
</dbReference>
<dbReference type="GO" id="GO:0036221">
    <property type="term" value="F:UTP diphosphatase activity"/>
    <property type="evidence" value="ECO:0007669"/>
    <property type="project" value="RHEA"/>
</dbReference>
<dbReference type="GO" id="GO:0009117">
    <property type="term" value="P:nucleotide metabolic process"/>
    <property type="evidence" value="ECO:0007669"/>
    <property type="project" value="UniProtKB-KW"/>
</dbReference>
<dbReference type="CDD" id="cd00555">
    <property type="entry name" value="Maf"/>
    <property type="match status" value="1"/>
</dbReference>
<dbReference type="Gene3D" id="3.90.950.10">
    <property type="match status" value="1"/>
</dbReference>
<dbReference type="HAMAP" id="MF_00528">
    <property type="entry name" value="Maf"/>
    <property type="match status" value="1"/>
</dbReference>
<dbReference type="InterPro" id="IPR029001">
    <property type="entry name" value="ITPase-like_fam"/>
</dbReference>
<dbReference type="InterPro" id="IPR003697">
    <property type="entry name" value="Maf-like"/>
</dbReference>
<dbReference type="NCBIfam" id="TIGR00172">
    <property type="entry name" value="maf"/>
    <property type="match status" value="1"/>
</dbReference>
<dbReference type="PANTHER" id="PTHR43213">
    <property type="entry name" value="BIFUNCTIONAL DTTP/UTP PYROPHOSPHATASE/METHYLTRANSFERASE PROTEIN-RELATED"/>
    <property type="match status" value="1"/>
</dbReference>
<dbReference type="PANTHER" id="PTHR43213:SF5">
    <property type="entry name" value="BIFUNCTIONAL DTTP_UTP PYROPHOSPHATASE_METHYLTRANSFERASE PROTEIN-RELATED"/>
    <property type="match status" value="1"/>
</dbReference>
<dbReference type="Pfam" id="PF02545">
    <property type="entry name" value="Maf"/>
    <property type="match status" value="1"/>
</dbReference>
<dbReference type="PIRSF" id="PIRSF006305">
    <property type="entry name" value="Maf"/>
    <property type="match status" value="1"/>
</dbReference>
<dbReference type="SUPFAM" id="SSF52972">
    <property type="entry name" value="ITPase-like"/>
    <property type="match status" value="1"/>
</dbReference>
<sequence>MMIILASSSPRRREILGRFFEIKVYPANVEERSTVKDSREKSLDIARKKALSVSSKFPGATIVAADTMVIFRGKTLGKPRNAEEARKMLRALSGNVHKVITGYCIIHNGRIIEGVEETEVKFREIGDELLEWYISTGEWKDKAGAYGIQGYASIFVEWIKGDYYNVVGLPIKVVVELTKLGFKPKR</sequence>
<keyword id="KW-0963">Cytoplasm</keyword>
<keyword id="KW-0378">Hydrolase</keyword>
<keyword id="KW-0546">Nucleotide metabolism</keyword>